<comment type="function">
    <text evidence="2">Thanks to its abundant amphiphilic alpha-helices, it may integrate into membrane phospholipids, leading to lysis of the membrane. Has hemolytic activity. Has antibacterial activity with a broad spectrum against various species of bacteria including both Gram-positive and Gram-negative groups. Also has ichthyotoxic activity.</text>
</comment>
<comment type="subunit">
    <text evidence="3">Exists as aggregates of 3-4 molecules.</text>
</comment>
<comment type="subcellular location">
    <subcellularLocation>
        <location evidence="1">Secreted</location>
    </subcellularLocation>
</comment>
<comment type="tissue specificity">
    <text evidence="4">Expressed by the skin glands.</text>
</comment>
<comment type="mass spectrometry" mass="2585.0" method="MALDI" evidence="1"/>
<comment type="toxic dose">
    <text>LD(50) is 20-40 ug/ml against killifish.</text>
</comment>
<comment type="similarity">
    <text evidence="3">Belongs to the grammistin family. Group 3 subfamily.</text>
</comment>
<organism>
    <name type="scientific">Pogonoperca punctata</name>
    <name type="common">Clown grouper</name>
    <name type="synonym">Grammistes punctatus</name>
    <dbReference type="NCBI Taxonomy" id="160738"/>
    <lineage>
        <taxon>Eukaryota</taxon>
        <taxon>Metazoa</taxon>
        <taxon>Chordata</taxon>
        <taxon>Craniata</taxon>
        <taxon>Vertebrata</taxon>
        <taxon>Euteleostomi</taxon>
        <taxon>Actinopterygii</taxon>
        <taxon>Neopterygii</taxon>
        <taxon>Teleostei</taxon>
        <taxon>Neoteleostei</taxon>
        <taxon>Acanthomorphata</taxon>
        <taxon>Eupercaria</taxon>
        <taxon>Perciformes</taxon>
        <taxon>Serranoidei</taxon>
        <taxon>Serranidae</taxon>
        <taxon>Epinephelinae</taxon>
        <taxon>Grammistini</taxon>
        <taxon>Pogonoperca</taxon>
    </lineage>
</organism>
<reference key="1">
    <citation type="journal article" date="2001" name="Fish. Sci.">
        <title>Primary and secondary structures of grammistins, peptide toxins isolated from the skin secretion of the soapfish Pogonoperca punctata.</title>
        <authorList>
            <person name="Shiomi K."/>
            <person name="Yokota H."/>
            <person name="Nagashima Y."/>
            <person name="Ishida M."/>
        </authorList>
    </citation>
    <scope>PROTEIN SEQUENCE</scope>
    <scope>MASS SPECTROMETRY</scope>
    <scope>TOXIC DOSE</scope>
    <scope>SUBCELLULAR LOCATION</scope>
    <source>
        <tissue>Skin secretion</tissue>
    </source>
</reference>
<reference key="2">
    <citation type="journal article" date="2001" name="Fish. Sci.">
        <title>Interaction of grammistins with lipids and their antibacterial activity.</title>
        <authorList>
            <person name="Yokota H."/>
            <person name="Nagashima Y."/>
            <person name="Shiomi K."/>
        </authorList>
    </citation>
    <scope>FUNCTION</scope>
</reference>
<dbReference type="GO" id="GO:0005576">
    <property type="term" value="C:extracellular region"/>
    <property type="evidence" value="ECO:0007669"/>
    <property type="project" value="UniProtKB-SubCell"/>
</dbReference>
<dbReference type="GO" id="GO:0090729">
    <property type="term" value="F:toxin activity"/>
    <property type="evidence" value="ECO:0007669"/>
    <property type="project" value="UniProtKB-KW"/>
</dbReference>
<dbReference type="GO" id="GO:0042742">
    <property type="term" value="P:defense response to bacterium"/>
    <property type="evidence" value="ECO:0007669"/>
    <property type="project" value="UniProtKB-KW"/>
</dbReference>
<dbReference type="GO" id="GO:0031640">
    <property type="term" value="P:killing of cells of another organism"/>
    <property type="evidence" value="ECO:0007669"/>
    <property type="project" value="UniProtKB-KW"/>
</dbReference>
<proteinExistence type="evidence at protein level"/>
<sequence length="25" mass="2587">NWRKILGQIASVGAGLLGSLLAGYE</sequence>
<accession>P69847</accession>
<evidence type="ECO:0000269" key="1">
    <source ref="1"/>
</evidence>
<evidence type="ECO:0000269" key="2">
    <source ref="2"/>
</evidence>
<evidence type="ECO:0000305" key="3"/>
<evidence type="ECO:0000305" key="4">
    <source ref="1"/>
</evidence>
<keyword id="KW-0044">Antibiotic</keyword>
<keyword id="KW-0929">Antimicrobial</keyword>
<keyword id="KW-0204">Cytolysis</keyword>
<keyword id="KW-0903">Direct protein sequencing</keyword>
<keyword id="KW-0354">Hemolysis</keyword>
<keyword id="KW-0964">Secreted</keyword>
<keyword id="KW-0800">Toxin</keyword>
<protein>
    <recommendedName>
        <fullName>Grammistin Pp 3</fullName>
    </recommendedName>
</protein>
<feature type="peptide" id="PRO_0000044530" description="Grammistin Pp 3">
    <location>
        <begin position="1"/>
        <end position="25"/>
    </location>
</feature>
<name>GRA3_POGPU</name>